<accession>P18472</accession>
<name>TRAW_ECOLI</name>
<gene>
    <name type="primary">traW</name>
    <name type="ordered locus">ECOK12F086</name>
</gene>
<protein>
    <recommendedName>
        <fullName>Protein TraW</fullName>
    </recommendedName>
</protein>
<comment type="function">
    <text evidence="3">Involved in F-pilus assembly. Required for F plasmid conjugative transfer.</text>
</comment>
<comment type="subcellular location">
    <subcellularLocation>
        <location evidence="2 4">Periplasm</location>
    </subcellularLocation>
</comment>
<comment type="disruption phenotype">
    <text evidence="2">No F pili expressed on cell surface.</text>
</comment>
<organism>
    <name type="scientific">Escherichia coli (strain K12)</name>
    <dbReference type="NCBI Taxonomy" id="83333"/>
    <lineage>
        <taxon>Bacteria</taxon>
        <taxon>Pseudomonadati</taxon>
        <taxon>Pseudomonadota</taxon>
        <taxon>Gammaproteobacteria</taxon>
        <taxon>Enterobacterales</taxon>
        <taxon>Enterobacteriaceae</taxon>
        <taxon>Escherichia</taxon>
    </lineage>
</organism>
<evidence type="ECO:0000255" key="1"/>
<evidence type="ECO:0000269" key="2">
    <source>
    </source>
</evidence>
<evidence type="ECO:0000305" key="3">
    <source>
    </source>
</evidence>
<evidence type="ECO:0000305" key="4">
    <source>
    </source>
</evidence>
<reference key="1">
    <citation type="journal article" date="1992" name="J. Bacteriol.">
        <title>Characterization, localization, and sequence of F transfer region products: the pilus assembly gene product TraW and a new product, TrbI.</title>
        <authorList>
            <person name="Maneewannakul S."/>
            <person name="Maneewannakul K."/>
            <person name="Ippen-Ihler K."/>
        </authorList>
    </citation>
    <scope>NUCLEOTIDE SEQUENCE [GENOMIC DNA]</scope>
    <scope>FUNCTION</scope>
    <scope>SUBCELLULAR LOCATION</scope>
    <scope>DISRUPTION PHENOTYPE</scope>
    <source>
        <strain>K12</strain>
    </source>
</reference>
<reference key="2">
    <citation type="journal article" date="1994" name="Microbiol. Rev.">
        <title>Analysis of the sequence and gene products of the transfer region of the F sex factor.</title>
        <authorList>
            <person name="Frost L.S."/>
            <person name="Ippen-Ihler K."/>
            <person name="Skurray R.A."/>
        </authorList>
    </citation>
    <scope>NUCLEOTIDE SEQUENCE [GENOMIC DNA]</scope>
</reference>
<reference key="3">
    <citation type="submission" date="2000-04" db="EMBL/GenBank/DDBJ databases">
        <title>Complete nucleotide sequence of the F plasmid: its implications for organization and diversification of plasmid genomes.</title>
        <authorList>
            <person name="Shimizu H."/>
            <person name="Saitoh Y."/>
            <person name="Suda Y."/>
            <person name="Uehara K."/>
            <person name="Sampei G."/>
            <person name="Mizobuchi K."/>
        </authorList>
    </citation>
    <scope>NUCLEOTIDE SEQUENCE [LARGE SCALE GENOMIC DNA]</scope>
    <source>
        <strain>K12 / CR63</strain>
    </source>
</reference>
<reference key="4">
    <citation type="journal article" date="1990" name="J. Bacteriol.">
        <title>Characterization of the F-plasmid conjugative transfer gene traU.</title>
        <authorList>
            <person name="Moore D."/>
            <person name="Maneewannakul K."/>
            <person name="Maneewannakul S."/>
            <person name="Wu J.H."/>
            <person name="Ippen-Ihler K."/>
            <person name="Bradley D.E."/>
        </authorList>
    </citation>
    <scope>NUCLEOTIDE SEQUENCE [GENOMIC DNA] OF 195-210</scope>
    <source>
        <strain>K12</strain>
    </source>
</reference>
<reference key="5">
    <citation type="journal article" date="1992" name="J. Mol. Biol.">
        <title>Characterization of the F plasmid mating aggregation gene traN and of a new F transfer region locus trbE.</title>
        <authorList>
            <person name="Maneewannakul S."/>
            <person name="Kathir P."/>
            <person name="Ippen-Ihler K."/>
        </authorList>
    </citation>
    <scope>SUBCELLULAR LOCATION</scope>
    <source>
        <strain>K12</strain>
        <plasmid>F</plasmid>
    </source>
</reference>
<dbReference type="EMBL" id="M93106">
    <property type="protein sequence ID" value="AAA24689.1"/>
    <property type="molecule type" value="Genomic_DNA"/>
</dbReference>
<dbReference type="EMBL" id="U01159">
    <property type="protein sequence ID" value="AAC44200.1"/>
    <property type="molecule type" value="Genomic_DNA"/>
</dbReference>
<dbReference type="EMBL" id="AP001918">
    <property type="protein sequence ID" value="BAA97956.1"/>
    <property type="molecule type" value="Genomic_DNA"/>
</dbReference>
<dbReference type="EMBL" id="M34695">
    <property type="protein sequence ID" value="AAA98087.2"/>
    <property type="molecule type" value="Genomic_DNA"/>
</dbReference>
<dbReference type="PIR" id="B42938">
    <property type="entry name" value="B42938"/>
</dbReference>
<dbReference type="RefSeq" id="NP_061465.1">
    <property type="nucleotide sequence ID" value="NC_002483.1"/>
</dbReference>
<dbReference type="RefSeq" id="NP_862931.1">
    <property type="nucleotide sequence ID" value="NC_004998.1"/>
</dbReference>
<dbReference type="RefSeq" id="WP_001203720.1">
    <property type="nucleotide sequence ID" value="NZ_SSUW01000046.1"/>
</dbReference>
<dbReference type="RefSeq" id="YP_001294745.1">
    <property type="nucleotide sequence ID" value="NC_009602.1"/>
</dbReference>
<dbReference type="RefSeq" id="YP_001711952.1">
    <property type="nucleotide sequence ID" value="NC_010409.1"/>
</dbReference>
<dbReference type="RefSeq" id="YP_004870066.1">
    <property type="nucleotide sequence ID" value="NC_016039.1"/>
</dbReference>
<dbReference type="RefSeq" id="YP_008997945.1">
    <property type="nucleotide sequence ID" value="NC_023315.1"/>
</dbReference>
<dbReference type="RefSeq" id="YP_009070603.1">
    <property type="nucleotide sequence ID" value="NC_025175.1"/>
</dbReference>
<dbReference type="DIP" id="DIP-28103N"/>
<dbReference type="KEGG" id="ecoc:C3026_24530"/>
<dbReference type="PATRIC" id="fig|83333.107.peg.626"/>
<dbReference type="OrthoDB" id="6625590at2"/>
<dbReference type="PRO" id="PR:P18472"/>
<dbReference type="GO" id="GO:0042597">
    <property type="term" value="C:periplasmic space"/>
    <property type="evidence" value="ECO:0007669"/>
    <property type="project" value="UniProtKB-SubCell"/>
</dbReference>
<dbReference type="InterPro" id="IPR014114">
    <property type="entry name" value="TraW"/>
</dbReference>
<dbReference type="InterPro" id="IPR025864">
    <property type="entry name" value="TraW_N_dom"/>
</dbReference>
<dbReference type="NCBIfam" id="NF010298">
    <property type="entry name" value="PRK13738.1"/>
    <property type="match status" value="1"/>
</dbReference>
<dbReference type="NCBIfam" id="TIGR02743">
    <property type="entry name" value="TraW"/>
    <property type="match status" value="1"/>
</dbReference>
<dbReference type="Pfam" id="PF12477">
    <property type="entry name" value="TraW_N"/>
    <property type="match status" value="1"/>
</dbReference>
<sequence length="210" mass="23630">MRCRGLIALLIWGQSVAAADLGTWGDLWPVKEPDMLTVIMQRLTALEQSGEMGRKMDAFKERVIRNSLRPPAVPGIGRTEKYGSRLFDPSVRLAADIRDNEGRVFARQGEVMNPLQYVPFNQTLYFINGDDPAQVAWMKRQTPPTLESKIILVQGSIPEMQKSLDSRVYFDQNGVLCQRLGIDQVPARVSAVPGDRFLKVEFIPAEEGRK</sequence>
<geneLocation type="plasmid">
    <name>F</name>
</geneLocation>
<proteinExistence type="inferred from homology"/>
<keyword id="KW-0184">Conjugation</keyword>
<keyword id="KW-0574">Periplasm</keyword>
<keyword id="KW-0614">Plasmid</keyword>
<keyword id="KW-0732">Signal</keyword>
<feature type="signal peptide" evidence="1">
    <location>
        <begin position="1"/>
        <end position="18"/>
    </location>
</feature>
<feature type="chain" id="PRO_0000024510" description="Protein TraW">
    <location>
        <begin position="19"/>
        <end position="210"/>
    </location>
</feature>